<protein>
    <recommendedName>
        <fullName evidence="1">Ribosomal RNA small subunit methyltransferase H</fullName>
        <ecNumber evidence="1">2.1.1.199</ecNumber>
    </recommendedName>
    <alternativeName>
        <fullName evidence="1">16S rRNA m(4)C1402 methyltransferase</fullName>
    </alternativeName>
    <alternativeName>
        <fullName evidence="1">rRNA (cytosine-N(4)-)-methyltransferase RsmH</fullName>
    </alternativeName>
</protein>
<proteinExistence type="inferred from homology"/>
<sequence length="332" mass="36860">MIKQDQRAERHIPVLLQPVLAGLMPLVGAKVIDGTFGAGGYTCALLKAGAEVIALDRDPHAISAGQSLVEEFFPRLRLVQMEFSQLDRVVEEKVDAVILDIGVSSMQLDEAERGFSFQKDGPLDMRMAQTGFTAGDVVNHLKARDLARIFKILGEERYAGRIARMIEKRRVVQPFLRTGDLAYAIEALIGRKPGDRIHPATRVFQALRIYVNDEIGELARGLFAAERILKPGGRLGVVSFHSLEDRMVKRFFSFRSGECMRSRYLPEIKTAPATFFPLFKGGITASEEELQQNPRSRSARLRIGVRTEAEALAADMKLFGLAEIASFEGGKK</sequence>
<organism>
    <name type="scientific">Bartonella grahamii (strain as4aup)</name>
    <dbReference type="NCBI Taxonomy" id="634504"/>
    <lineage>
        <taxon>Bacteria</taxon>
        <taxon>Pseudomonadati</taxon>
        <taxon>Pseudomonadota</taxon>
        <taxon>Alphaproteobacteria</taxon>
        <taxon>Hyphomicrobiales</taxon>
        <taxon>Bartonellaceae</taxon>
        <taxon>Bartonella</taxon>
    </lineage>
</organism>
<reference key="1">
    <citation type="journal article" date="2009" name="PLoS Genet.">
        <title>Run-off replication of host-adaptability genes is associated with gene transfer agents in the genome of mouse-infecting Bartonella grahamii.</title>
        <authorList>
            <person name="Berglund E.C."/>
            <person name="Frank A.C."/>
            <person name="Calteau A."/>
            <person name="Vinnere Pettersson O."/>
            <person name="Granberg F."/>
            <person name="Eriksson A.-S."/>
            <person name="Naeslund K."/>
            <person name="Holmberg M."/>
            <person name="Lindroos H."/>
            <person name="Andersson S.G."/>
        </authorList>
    </citation>
    <scope>NUCLEOTIDE SEQUENCE [LARGE SCALE GENOMIC DNA]</scope>
    <source>
        <strain>as4aup</strain>
    </source>
</reference>
<comment type="function">
    <text evidence="1">Specifically methylates the N4 position of cytidine in position 1402 (C1402) of 16S rRNA.</text>
</comment>
<comment type="catalytic activity">
    <reaction evidence="1">
        <text>cytidine(1402) in 16S rRNA + S-adenosyl-L-methionine = N(4)-methylcytidine(1402) in 16S rRNA + S-adenosyl-L-homocysteine + H(+)</text>
        <dbReference type="Rhea" id="RHEA:42928"/>
        <dbReference type="Rhea" id="RHEA-COMP:10286"/>
        <dbReference type="Rhea" id="RHEA-COMP:10287"/>
        <dbReference type="ChEBI" id="CHEBI:15378"/>
        <dbReference type="ChEBI" id="CHEBI:57856"/>
        <dbReference type="ChEBI" id="CHEBI:59789"/>
        <dbReference type="ChEBI" id="CHEBI:74506"/>
        <dbReference type="ChEBI" id="CHEBI:82748"/>
        <dbReference type="EC" id="2.1.1.199"/>
    </reaction>
</comment>
<comment type="subcellular location">
    <subcellularLocation>
        <location evidence="1">Cytoplasm</location>
    </subcellularLocation>
</comment>
<comment type="similarity">
    <text evidence="1">Belongs to the methyltransferase superfamily. RsmH family.</text>
</comment>
<feature type="chain" id="PRO_0000386740" description="Ribosomal RNA small subunit methyltransferase H">
    <location>
        <begin position="1"/>
        <end position="332"/>
    </location>
</feature>
<feature type="binding site" evidence="1">
    <location>
        <begin position="39"/>
        <end position="41"/>
    </location>
    <ligand>
        <name>S-adenosyl-L-methionine</name>
        <dbReference type="ChEBI" id="CHEBI:59789"/>
    </ligand>
</feature>
<feature type="binding site" evidence="1">
    <location>
        <position position="56"/>
    </location>
    <ligand>
        <name>S-adenosyl-L-methionine</name>
        <dbReference type="ChEBI" id="CHEBI:59789"/>
    </ligand>
</feature>
<feature type="binding site" evidence="1">
    <location>
        <position position="83"/>
    </location>
    <ligand>
        <name>S-adenosyl-L-methionine</name>
        <dbReference type="ChEBI" id="CHEBI:59789"/>
    </ligand>
</feature>
<feature type="binding site" evidence="1">
    <location>
        <position position="100"/>
    </location>
    <ligand>
        <name>S-adenosyl-L-methionine</name>
        <dbReference type="ChEBI" id="CHEBI:59789"/>
    </ligand>
</feature>
<feature type="binding site" evidence="1">
    <location>
        <position position="107"/>
    </location>
    <ligand>
        <name>S-adenosyl-L-methionine</name>
        <dbReference type="ChEBI" id="CHEBI:59789"/>
    </ligand>
</feature>
<gene>
    <name evidence="1" type="primary">rsmH</name>
    <name type="synonym">mraW</name>
    <name type="ordered locus">Bgr_14050</name>
</gene>
<evidence type="ECO:0000255" key="1">
    <source>
        <dbReference type="HAMAP-Rule" id="MF_01007"/>
    </source>
</evidence>
<keyword id="KW-0963">Cytoplasm</keyword>
<keyword id="KW-0489">Methyltransferase</keyword>
<keyword id="KW-0698">rRNA processing</keyword>
<keyword id="KW-0949">S-adenosyl-L-methionine</keyword>
<keyword id="KW-0808">Transferase</keyword>
<dbReference type="EC" id="2.1.1.199" evidence="1"/>
<dbReference type="EMBL" id="CP001562">
    <property type="protein sequence ID" value="ACS51611.1"/>
    <property type="molecule type" value="Genomic_DNA"/>
</dbReference>
<dbReference type="RefSeq" id="WP_015856649.1">
    <property type="nucleotide sequence ID" value="NC_012846.1"/>
</dbReference>
<dbReference type="SMR" id="C6AEK6"/>
<dbReference type="STRING" id="634504.Bgr_14050"/>
<dbReference type="KEGG" id="bgr:Bgr_14050"/>
<dbReference type="eggNOG" id="COG0275">
    <property type="taxonomic scope" value="Bacteria"/>
</dbReference>
<dbReference type="HOGENOM" id="CLU_038422_1_1_5"/>
<dbReference type="OrthoDB" id="9806637at2"/>
<dbReference type="Proteomes" id="UP000001489">
    <property type="component" value="Chromosome"/>
</dbReference>
<dbReference type="GO" id="GO:0005737">
    <property type="term" value="C:cytoplasm"/>
    <property type="evidence" value="ECO:0007669"/>
    <property type="project" value="UniProtKB-SubCell"/>
</dbReference>
<dbReference type="GO" id="GO:0071424">
    <property type="term" value="F:rRNA (cytosine-N4-)-methyltransferase activity"/>
    <property type="evidence" value="ECO:0007669"/>
    <property type="project" value="UniProtKB-UniRule"/>
</dbReference>
<dbReference type="GO" id="GO:0070475">
    <property type="term" value="P:rRNA base methylation"/>
    <property type="evidence" value="ECO:0007669"/>
    <property type="project" value="UniProtKB-UniRule"/>
</dbReference>
<dbReference type="CDD" id="cd02440">
    <property type="entry name" value="AdoMet_MTases"/>
    <property type="match status" value="1"/>
</dbReference>
<dbReference type="Gene3D" id="1.10.150.170">
    <property type="entry name" value="Putative methyltransferase TM0872, insert domain"/>
    <property type="match status" value="1"/>
</dbReference>
<dbReference type="Gene3D" id="3.40.50.150">
    <property type="entry name" value="Vaccinia Virus protein VP39"/>
    <property type="match status" value="1"/>
</dbReference>
<dbReference type="HAMAP" id="MF_01007">
    <property type="entry name" value="16SrRNA_methyltr_H"/>
    <property type="match status" value="1"/>
</dbReference>
<dbReference type="InterPro" id="IPR002903">
    <property type="entry name" value="RsmH"/>
</dbReference>
<dbReference type="InterPro" id="IPR023397">
    <property type="entry name" value="SAM-dep_MeTrfase_MraW_recog"/>
</dbReference>
<dbReference type="InterPro" id="IPR029063">
    <property type="entry name" value="SAM-dependent_MTases_sf"/>
</dbReference>
<dbReference type="NCBIfam" id="TIGR00006">
    <property type="entry name" value="16S rRNA (cytosine(1402)-N(4))-methyltransferase RsmH"/>
    <property type="match status" value="1"/>
</dbReference>
<dbReference type="PANTHER" id="PTHR11265:SF0">
    <property type="entry name" value="12S RRNA N4-METHYLCYTIDINE METHYLTRANSFERASE"/>
    <property type="match status" value="1"/>
</dbReference>
<dbReference type="PANTHER" id="PTHR11265">
    <property type="entry name" value="S-ADENOSYL-METHYLTRANSFERASE MRAW"/>
    <property type="match status" value="1"/>
</dbReference>
<dbReference type="Pfam" id="PF01795">
    <property type="entry name" value="Methyltransf_5"/>
    <property type="match status" value="1"/>
</dbReference>
<dbReference type="PIRSF" id="PIRSF004486">
    <property type="entry name" value="MraW"/>
    <property type="match status" value="1"/>
</dbReference>
<dbReference type="SUPFAM" id="SSF81799">
    <property type="entry name" value="Putative methyltransferase TM0872, insert domain"/>
    <property type="match status" value="1"/>
</dbReference>
<dbReference type="SUPFAM" id="SSF53335">
    <property type="entry name" value="S-adenosyl-L-methionine-dependent methyltransferases"/>
    <property type="match status" value="1"/>
</dbReference>
<name>RSMH_BARGA</name>
<accession>C6AEK6</accession>